<feature type="chain" id="PRO_0000080037" description="Dystrobrevin alpha">
    <location>
        <begin position="1"/>
        <end position="746"/>
    </location>
</feature>
<feature type="zinc finger region" description="ZZ-type" evidence="2">
    <location>
        <begin position="238"/>
        <end position="294"/>
    </location>
</feature>
<feature type="region of interest" description="Interaction with MAGEE1" evidence="5">
    <location>
        <begin position="1"/>
        <end position="288"/>
    </location>
</feature>
<feature type="region of interest" description="Syntrophin-binding region">
    <location>
        <begin position="397"/>
        <end position="447"/>
    </location>
</feature>
<feature type="region of interest" description="Disordered" evidence="3">
    <location>
        <begin position="555"/>
        <end position="577"/>
    </location>
</feature>
<feature type="region of interest" description="Disordered" evidence="3">
    <location>
        <begin position="646"/>
        <end position="667"/>
    </location>
</feature>
<feature type="region of interest" description="Disordered" evidence="3">
    <location>
        <begin position="684"/>
        <end position="721"/>
    </location>
</feature>
<feature type="coiled-coil region" evidence="1">
    <location>
        <begin position="458"/>
        <end position="557"/>
    </location>
</feature>
<feature type="compositionally biased region" description="Low complexity" evidence="3">
    <location>
        <begin position="563"/>
        <end position="576"/>
    </location>
</feature>
<feature type="binding site" evidence="2">
    <location>
        <position position="243"/>
    </location>
    <ligand>
        <name>Zn(2+)</name>
        <dbReference type="ChEBI" id="CHEBI:29105"/>
        <label>1</label>
    </ligand>
</feature>
<feature type="binding site" evidence="2">
    <location>
        <position position="246"/>
    </location>
    <ligand>
        <name>Zn(2+)</name>
        <dbReference type="ChEBI" id="CHEBI:29105"/>
        <label>1</label>
    </ligand>
</feature>
<feature type="binding site" evidence="2">
    <location>
        <position position="258"/>
    </location>
    <ligand>
        <name>Zn(2+)</name>
        <dbReference type="ChEBI" id="CHEBI:29105"/>
        <label>2</label>
    </ligand>
</feature>
<feature type="binding site" evidence="2">
    <location>
        <position position="261"/>
    </location>
    <ligand>
        <name>Zn(2+)</name>
        <dbReference type="ChEBI" id="CHEBI:29105"/>
        <label>2</label>
    </ligand>
</feature>
<feature type="binding site" evidence="2">
    <location>
        <position position="267"/>
    </location>
    <ligand>
        <name>Zn(2+)</name>
        <dbReference type="ChEBI" id="CHEBI:29105"/>
        <label>1</label>
    </ligand>
</feature>
<feature type="binding site" evidence="2">
    <location>
        <position position="270"/>
    </location>
    <ligand>
        <name>Zn(2+)</name>
        <dbReference type="ChEBI" id="CHEBI:29105"/>
        <label>1</label>
    </ligand>
</feature>
<feature type="binding site" evidence="2">
    <location>
        <position position="280"/>
    </location>
    <ligand>
        <name>Zn(2+)</name>
        <dbReference type="ChEBI" id="CHEBI:29105"/>
        <label>2</label>
    </ligand>
</feature>
<feature type="binding site" evidence="2">
    <location>
        <position position="284"/>
    </location>
    <ligand>
        <name>Zn(2+)</name>
        <dbReference type="ChEBI" id="CHEBI:29105"/>
        <label>2</label>
    </ligand>
</feature>
<feature type="modified residue" description="Phosphoserine" evidence="14">
    <location>
        <position position="666"/>
    </location>
</feature>
<feature type="splice variant" id="VSP_004214" description="In isoform 5 and isoform 7." evidence="11 12">
    <original>V</original>
    <variation>VDTW</variation>
    <location>
        <position position="334"/>
    </location>
</feature>
<feature type="splice variant" id="VSP_004215" description="In isoform 2 and isoform 7." evidence="11">
    <location>
        <begin position="363"/>
        <end position="419"/>
    </location>
</feature>
<feature type="splice variant" id="VSP_004216" description="In isoform 5 and isoform 6." evidence="10 12">
    <original>PPKDSEVE</original>
    <variation>DGAHGGCV</variation>
    <location>
        <begin position="364"/>
        <end position="371"/>
    </location>
</feature>
<feature type="splice variant" id="VSP_004217" description="In isoform 5 and isoform 6." evidence="10 12">
    <location>
        <begin position="372"/>
        <end position="746"/>
    </location>
</feature>
<feature type="splice variant" id="VSP_004221" description="In isoform 3." evidence="10">
    <original>TQGASSPRSSPS</original>
    <variation>VMHEIIPLEERT</variation>
    <location>
        <begin position="559"/>
        <end position="570"/>
    </location>
</feature>
<feature type="splice variant" id="VSP_004218" description="In isoform 4 and isoform 7." evidence="10 11">
    <original>TQGASSPRS</original>
    <variation>VSYVPYCRS</variation>
    <location>
        <begin position="559"/>
        <end position="567"/>
    </location>
</feature>
<feature type="splice variant" id="VSP_004220" description="In isoform 2." evidence="11">
    <original>QG</original>
    <variation>R</variation>
    <location>
        <begin position="560"/>
        <end position="561"/>
    </location>
</feature>
<feature type="splice variant" id="VSP_004219" description="In isoform 4 and isoform 7." evidence="10 11">
    <location>
        <begin position="568"/>
        <end position="746"/>
    </location>
</feature>
<feature type="splice variant" id="VSP_004222" description="In isoform 3." evidence="10">
    <location>
        <begin position="571"/>
        <end position="746"/>
    </location>
</feature>
<feature type="mutagenesis site" description="Animals show deep trabeculation, dilated cardiomyopathy and cardiac dysfunction." evidence="7">
    <original>N</original>
    <variation>S</variation>
    <location>
        <position position="49"/>
    </location>
</feature>
<feature type="sequence conflict" description="In Ref. 1; CAA64519." evidence="13" ref="1">
    <original>V</original>
    <variation>L</variation>
    <location>
        <position position="241"/>
    </location>
</feature>
<feature type="sequence conflict" description="In Ref. 5; BAB31746." evidence="13" ref="5">
    <original>M</original>
    <variation>I</variation>
    <location>
        <position position="251"/>
    </location>
</feature>
<feature type="sequence conflict" description="In Ref. 4; AAD33915." evidence="13" ref="4">
    <original>Q</original>
    <variation>P</variation>
    <location>
        <position position="259"/>
    </location>
</feature>
<feature type="sequence conflict" description="In Ref. 4; AAD33915/AAD33914." evidence="13" ref="4">
    <original>D</original>
    <variation>N</variation>
    <location>
        <position position="416"/>
    </location>
</feature>
<protein>
    <recommendedName>
        <fullName>Dystrobrevin alpha</fullName>
        <shortName>DTN-A</shortName>
    </recommendedName>
    <alternativeName>
        <fullName>Alpha-dystrobrevin</fullName>
    </alternativeName>
</protein>
<dbReference type="EMBL" id="X95226">
    <property type="protein sequence ID" value="CAA64518.1"/>
    <property type="molecule type" value="mRNA"/>
</dbReference>
<dbReference type="EMBL" id="X95227">
    <property type="protein sequence ID" value="CAA64519.1"/>
    <property type="molecule type" value="mRNA"/>
</dbReference>
<dbReference type="EMBL" id="Z79787">
    <property type="protein sequence ID" value="CAB02145.1"/>
    <property type="molecule type" value="Genomic_DNA"/>
</dbReference>
<dbReference type="EMBL" id="Z79788">
    <property type="protein sequence ID" value="CAB02145.1"/>
    <property type="status" value="JOINED"/>
    <property type="molecule type" value="Genomic_DNA"/>
</dbReference>
<dbReference type="EMBL" id="Z79789">
    <property type="protein sequence ID" value="CAB02145.1"/>
    <property type="status" value="JOINED"/>
    <property type="molecule type" value="Genomic_DNA"/>
</dbReference>
<dbReference type="EMBL" id="Z79790">
    <property type="protein sequence ID" value="CAB02145.1"/>
    <property type="status" value="JOINED"/>
    <property type="molecule type" value="Genomic_DNA"/>
</dbReference>
<dbReference type="EMBL" id="Z79791">
    <property type="protein sequence ID" value="CAB02145.1"/>
    <property type="status" value="JOINED"/>
    <property type="molecule type" value="Genomic_DNA"/>
</dbReference>
<dbReference type="EMBL" id="Z79792">
    <property type="protein sequence ID" value="CAB02145.1"/>
    <property type="status" value="JOINED"/>
    <property type="molecule type" value="Genomic_DNA"/>
</dbReference>
<dbReference type="EMBL" id="Z79793">
    <property type="protein sequence ID" value="CAB02145.1"/>
    <property type="status" value="JOINED"/>
    <property type="molecule type" value="Genomic_DNA"/>
</dbReference>
<dbReference type="EMBL" id="Z79794">
    <property type="protein sequence ID" value="CAB02145.1"/>
    <property type="status" value="JOINED"/>
    <property type="molecule type" value="Genomic_DNA"/>
</dbReference>
<dbReference type="EMBL" id="Z79795">
    <property type="protein sequence ID" value="CAB02145.1"/>
    <property type="status" value="JOINED"/>
    <property type="molecule type" value="Genomic_DNA"/>
</dbReference>
<dbReference type="EMBL" id="Z79796">
    <property type="protein sequence ID" value="CAB02145.1"/>
    <property type="status" value="JOINED"/>
    <property type="molecule type" value="Genomic_DNA"/>
</dbReference>
<dbReference type="EMBL" id="Z79797">
    <property type="protein sequence ID" value="CAB02145.1"/>
    <property type="status" value="JOINED"/>
    <property type="molecule type" value="Genomic_DNA"/>
</dbReference>
<dbReference type="EMBL" id="AJ009669">
    <property type="protein sequence ID" value="CAA08770.1"/>
    <property type="molecule type" value="mRNA"/>
</dbReference>
<dbReference type="EMBL" id="AF143544">
    <property type="protein sequence ID" value="AAD33915.1"/>
    <property type="molecule type" value="mRNA"/>
</dbReference>
<dbReference type="EMBL" id="AF143543">
    <property type="protein sequence ID" value="AAD33914.1"/>
    <property type="molecule type" value="mRNA"/>
</dbReference>
<dbReference type="EMBL" id="AF143542">
    <property type="protein sequence ID" value="AAD33913.1"/>
    <property type="molecule type" value="mRNA"/>
</dbReference>
<dbReference type="EMBL" id="AK019477">
    <property type="protein sequence ID" value="BAB31746.1"/>
    <property type="molecule type" value="mRNA"/>
</dbReference>
<dbReference type="CCDS" id="CCDS29094.1">
    <molecule id="Q9D2N4-6"/>
</dbReference>
<dbReference type="CCDS" id="CCDS89200.1">
    <molecule id="Q9D2N4-1"/>
</dbReference>
<dbReference type="RefSeq" id="NP_001272736.1">
    <property type="nucleotide sequence ID" value="NM_001285807.1"/>
</dbReference>
<dbReference type="RefSeq" id="NP_001272739.1">
    <property type="nucleotide sequence ID" value="NM_001285810.1"/>
</dbReference>
<dbReference type="RefSeq" id="NP_001272746.1">
    <property type="nucleotide sequence ID" value="NM_001285817.1"/>
</dbReference>
<dbReference type="RefSeq" id="NP_034217.2">
    <molecule id="Q9D2N4-6"/>
    <property type="nucleotide sequence ID" value="NM_010087.4"/>
</dbReference>
<dbReference type="RefSeq" id="XP_017173306.1">
    <property type="nucleotide sequence ID" value="XM_017317817.1"/>
</dbReference>
<dbReference type="RefSeq" id="XP_017173308.1">
    <property type="nucleotide sequence ID" value="XM_017317819.1"/>
</dbReference>
<dbReference type="RefSeq" id="XP_017173310.1">
    <property type="nucleotide sequence ID" value="XM_017317821.1"/>
</dbReference>
<dbReference type="RefSeq" id="XP_017173311.1">
    <property type="nucleotide sequence ID" value="XM_017317822.1"/>
</dbReference>
<dbReference type="RefSeq" id="XP_017173312.1">
    <property type="nucleotide sequence ID" value="XM_017317823.1"/>
</dbReference>
<dbReference type="RefSeq" id="XP_017173313.1">
    <property type="nucleotide sequence ID" value="XM_017317824.1"/>
</dbReference>
<dbReference type="RefSeq" id="XP_017173315.1">
    <property type="nucleotide sequence ID" value="XM_017317826.1"/>
</dbReference>
<dbReference type="RefSeq" id="XP_030106181.1">
    <molecule id="Q9D2N4-7"/>
    <property type="nucleotide sequence ID" value="XM_030250321.1"/>
</dbReference>
<dbReference type="RefSeq" id="XP_030106183.1">
    <molecule id="Q9D2N4-5"/>
    <property type="nucleotide sequence ID" value="XM_030250323.1"/>
</dbReference>
<dbReference type="RefSeq" id="XP_036016874.1">
    <molecule id="Q9D2N4-6"/>
    <property type="nucleotide sequence ID" value="XM_036160981.1"/>
</dbReference>
<dbReference type="PDB" id="8YT8">
    <property type="method" value="EM"/>
    <property type="resolution" value="3.50 A"/>
    <property type="chains" value="C=32-237"/>
</dbReference>
<dbReference type="PDBsum" id="8YT8"/>
<dbReference type="EMDB" id="EMD-39568"/>
<dbReference type="SMR" id="Q9D2N4"/>
<dbReference type="BioGRID" id="199334">
    <property type="interactions" value="10"/>
</dbReference>
<dbReference type="CORUM" id="Q9D2N4"/>
<dbReference type="FunCoup" id="Q9D2N4">
    <property type="interactions" value="1096"/>
</dbReference>
<dbReference type="IntAct" id="Q9D2N4">
    <property type="interactions" value="18"/>
</dbReference>
<dbReference type="MINT" id="Q9D2N4"/>
<dbReference type="STRING" id="10090.ENSMUSP00000111498"/>
<dbReference type="GlyGen" id="Q9D2N4">
    <property type="glycosylation" value="2 sites"/>
</dbReference>
<dbReference type="iPTMnet" id="Q9D2N4"/>
<dbReference type="PhosphoSitePlus" id="Q9D2N4"/>
<dbReference type="SwissPalm" id="Q9D2N4"/>
<dbReference type="jPOST" id="Q9D2N4"/>
<dbReference type="PaxDb" id="10090-ENSMUSP00000111498"/>
<dbReference type="PeptideAtlas" id="Q9D2N4"/>
<dbReference type="ProteomicsDB" id="277515">
    <molecule id="Q9D2N4-1"/>
</dbReference>
<dbReference type="ProteomicsDB" id="277516">
    <molecule id="Q9D2N4-2"/>
</dbReference>
<dbReference type="ProteomicsDB" id="277517">
    <molecule id="Q9D2N4-3"/>
</dbReference>
<dbReference type="ProteomicsDB" id="277518">
    <molecule id="Q9D2N4-4"/>
</dbReference>
<dbReference type="ProteomicsDB" id="277519">
    <molecule id="Q9D2N4-5"/>
</dbReference>
<dbReference type="ProteomicsDB" id="277520">
    <molecule id="Q9D2N4-6"/>
</dbReference>
<dbReference type="ProteomicsDB" id="277521">
    <molecule id="Q9D2N4-7"/>
</dbReference>
<dbReference type="Pumba" id="Q9D2N4"/>
<dbReference type="Antibodypedia" id="22242">
    <property type="antibodies" value="261 antibodies from 26 providers"/>
</dbReference>
<dbReference type="DNASU" id="13527"/>
<dbReference type="Ensembl" id="ENSMUST00000047954.15">
    <molecule id="Q9D2N4-6"/>
    <property type="protein sequence ID" value="ENSMUSP00000037475.8"/>
    <property type="gene ID" value="ENSMUSG00000024302.17"/>
</dbReference>
<dbReference type="GeneID" id="13527"/>
<dbReference type="KEGG" id="mmu:13527"/>
<dbReference type="UCSC" id="uc008efs.2">
    <molecule id="Q9D2N4-7"/>
    <property type="organism name" value="mouse"/>
</dbReference>
<dbReference type="UCSC" id="uc008efv.2">
    <molecule id="Q9D2N4-4"/>
    <property type="organism name" value="mouse"/>
</dbReference>
<dbReference type="UCSC" id="uc008efw.2">
    <molecule id="Q9D2N4-3"/>
    <property type="organism name" value="mouse"/>
</dbReference>
<dbReference type="UCSC" id="uc008efx.2">
    <molecule id="Q9D2N4-1"/>
    <property type="organism name" value="mouse"/>
</dbReference>
<dbReference type="AGR" id="MGI:106039"/>
<dbReference type="CTD" id="1837"/>
<dbReference type="MGI" id="MGI:106039">
    <property type="gene designation" value="Dtna"/>
</dbReference>
<dbReference type="VEuPathDB" id="HostDB:ENSMUSG00000024302"/>
<dbReference type="eggNOG" id="KOG4301">
    <property type="taxonomic scope" value="Eukaryota"/>
</dbReference>
<dbReference type="GeneTree" id="ENSGT00940000153897"/>
<dbReference type="HOGENOM" id="CLU_001187_2_0_1"/>
<dbReference type="InParanoid" id="Q9D2N4"/>
<dbReference type="OrthoDB" id="6019271at2759"/>
<dbReference type="PhylomeDB" id="Q9D2N4"/>
<dbReference type="Reactome" id="R-MMU-9913351">
    <property type="pathway name" value="Formation of the dystrophin-glycoprotein complex (DGC)"/>
</dbReference>
<dbReference type="BioGRID-ORCS" id="13527">
    <property type="hits" value="2 hits in 76 CRISPR screens"/>
</dbReference>
<dbReference type="CD-CODE" id="CE726F99">
    <property type="entry name" value="Postsynaptic density"/>
</dbReference>
<dbReference type="ChiTaRS" id="Dtna">
    <property type="organism name" value="mouse"/>
</dbReference>
<dbReference type="PRO" id="PR:Q9D2N4"/>
<dbReference type="Proteomes" id="UP000000589">
    <property type="component" value="Chromosome 18"/>
</dbReference>
<dbReference type="RNAct" id="Q9D2N4">
    <property type="molecule type" value="protein"/>
</dbReference>
<dbReference type="Bgee" id="ENSMUSG00000024302">
    <property type="expression patterns" value="Expressed in saccule of membranous labyrinth and 236 other cell types or tissues"/>
</dbReference>
<dbReference type="ExpressionAtlas" id="Q9D2N4">
    <property type="expression patterns" value="baseline and differential"/>
</dbReference>
<dbReference type="GO" id="GO:0005737">
    <property type="term" value="C:cytoplasm"/>
    <property type="evidence" value="ECO:0007669"/>
    <property type="project" value="UniProtKB-SubCell"/>
</dbReference>
<dbReference type="GO" id="GO:0016014">
    <property type="term" value="C:dystrobrevin complex"/>
    <property type="evidence" value="ECO:0000303"/>
    <property type="project" value="UniProtKB"/>
</dbReference>
<dbReference type="GO" id="GO:0032991">
    <property type="term" value="C:protein-containing complex"/>
    <property type="evidence" value="ECO:0000266"/>
    <property type="project" value="MGI"/>
</dbReference>
<dbReference type="GO" id="GO:0042383">
    <property type="term" value="C:sarcolemma"/>
    <property type="evidence" value="ECO:0000304"/>
    <property type="project" value="MGI"/>
</dbReference>
<dbReference type="GO" id="GO:0045202">
    <property type="term" value="C:synapse"/>
    <property type="evidence" value="ECO:0000314"/>
    <property type="project" value="MGI"/>
</dbReference>
<dbReference type="GO" id="GO:0008270">
    <property type="term" value="F:zinc ion binding"/>
    <property type="evidence" value="ECO:0007669"/>
    <property type="project" value="UniProtKB-KW"/>
</dbReference>
<dbReference type="CDD" id="cd16249">
    <property type="entry name" value="EFh_DTNA"/>
    <property type="match status" value="1"/>
</dbReference>
<dbReference type="CDD" id="cd02334">
    <property type="entry name" value="ZZ_dystrophin"/>
    <property type="match status" value="1"/>
</dbReference>
<dbReference type="FunFam" id="1.10.238.10:FF:000014">
    <property type="entry name" value="Dystrobrevin alpha"/>
    <property type="match status" value="1"/>
</dbReference>
<dbReference type="FunFam" id="1.10.238.10:FF:000016">
    <property type="entry name" value="Dystrobrevin alpha"/>
    <property type="match status" value="1"/>
</dbReference>
<dbReference type="FunFam" id="3.30.60.90:FF:000002">
    <property type="entry name" value="Dystrobrevin alpha"/>
    <property type="match status" value="1"/>
</dbReference>
<dbReference type="Gene3D" id="3.30.60.90">
    <property type="match status" value="1"/>
</dbReference>
<dbReference type="Gene3D" id="1.10.238.10">
    <property type="entry name" value="EF-hand"/>
    <property type="match status" value="2"/>
</dbReference>
<dbReference type="InterPro" id="IPR017432">
    <property type="entry name" value="Distrobrevin"/>
</dbReference>
<dbReference type="InterPro" id="IPR011992">
    <property type="entry name" value="EF-hand-dom_pair"/>
</dbReference>
<dbReference type="InterPro" id="IPR015153">
    <property type="entry name" value="EF-hand_dom_typ1"/>
</dbReference>
<dbReference type="InterPro" id="IPR015154">
    <property type="entry name" value="EF-hand_dom_typ2"/>
</dbReference>
<dbReference type="InterPro" id="IPR050774">
    <property type="entry name" value="KCMF1/Dystrophin"/>
</dbReference>
<dbReference type="InterPro" id="IPR000433">
    <property type="entry name" value="Znf_ZZ"/>
</dbReference>
<dbReference type="InterPro" id="IPR043145">
    <property type="entry name" value="Znf_ZZ_sf"/>
</dbReference>
<dbReference type="PANTHER" id="PTHR12268:SF19">
    <property type="entry name" value="DYSTROBREVIN ALPHA"/>
    <property type="match status" value="1"/>
</dbReference>
<dbReference type="PANTHER" id="PTHR12268">
    <property type="entry name" value="E3 UBIQUITIN-PROTEIN LIGASE KCMF1"/>
    <property type="match status" value="1"/>
</dbReference>
<dbReference type="Pfam" id="PF09068">
    <property type="entry name" value="EF-hand_2"/>
    <property type="match status" value="1"/>
</dbReference>
<dbReference type="Pfam" id="PF09069">
    <property type="entry name" value="EF-hand_3"/>
    <property type="match status" value="1"/>
</dbReference>
<dbReference type="Pfam" id="PF00569">
    <property type="entry name" value="ZZ"/>
    <property type="match status" value="1"/>
</dbReference>
<dbReference type="PIRSF" id="PIRSF038204">
    <property type="entry name" value="Distrobrevin"/>
    <property type="match status" value="1"/>
</dbReference>
<dbReference type="SMART" id="SM00291">
    <property type="entry name" value="ZnF_ZZ"/>
    <property type="match status" value="1"/>
</dbReference>
<dbReference type="SUPFAM" id="SSF47473">
    <property type="entry name" value="EF-hand"/>
    <property type="match status" value="2"/>
</dbReference>
<dbReference type="SUPFAM" id="SSF57850">
    <property type="entry name" value="RING/U-box"/>
    <property type="match status" value="1"/>
</dbReference>
<dbReference type="PROSITE" id="PS01357">
    <property type="entry name" value="ZF_ZZ_1"/>
    <property type="match status" value="1"/>
</dbReference>
<dbReference type="PROSITE" id="PS50135">
    <property type="entry name" value="ZF_ZZ_2"/>
    <property type="match status" value="1"/>
</dbReference>
<reference key="1">
    <citation type="journal article" date="1996" name="J. Biol. Chem.">
        <title>Isoform diversity of dystrobrevin, the murine 87-kDa postsynaptic protein.</title>
        <authorList>
            <person name="Blake D.J."/>
            <person name="Nawrotzki R."/>
            <person name="Peters M.F."/>
            <person name="Froehner S.C."/>
            <person name="Davies K.E."/>
        </authorList>
    </citation>
    <scope>NUCLEOTIDE SEQUENCE [MRNA] (ISOFORMS 2 AND 7)</scope>
    <source>
        <tissue>Brain</tissue>
    </source>
</reference>
<reference key="2">
    <citation type="journal article" date="1997" name="Genomics">
        <title>Genomic organization of the mouse dystrobrevin gene: comparative analysis with the dystrophin gene.</title>
        <authorList>
            <person name="Ambrose H.J."/>
            <person name="Blake D.J."/>
            <person name="Nawrotzki R.A."/>
            <person name="Davies K.E."/>
        </authorList>
    </citation>
    <scope>NUCLEOTIDE SEQUENCE [GENOMIC DNA]</scope>
    <scope>ALTERNATIVE SPLICING</scope>
    <source>
        <strain>129/Sv</strain>
        <tissue>Brain</tissue>
    </source>
</reference>
<reference key="3">
    <citation type="journal article" date="1998" name="J. Cell Sci.">
        <title>Characterisation of alpha-dystrobrevin in muscle.</title>
        <authorList>
            <person name="Nawrotzki R."/>
            <person name="Loh N.Y."/>
            <person name="Ruegg M.A."/>
            <person name="Davies K.E."/>
            <person name="Blake D.J."/>
        </authorList>
    </citation>
    <scope>NUCLEOTIDE SEQUENCE [MRNA] (ISOFORM 5)</scope>
    <source>
        <tissue>Muscle</tissue>
    </source>
</reference>
<reference key="4">
    <citation type="journal article" date="1999" name="Gene">
        <title>Differential expression and developmental regulation of a novel alpha-dystrobrevin isoform in muscle.</title>
        <authorList>
            <person name="Enigk R.E."/>
            <person name="Maimone M.M."/>
        </authorList>
    </citation>
    <scope>NUCLEOTIDE SEQUENCE [MRNA] (ISOFORMS 3; 4 AND 6)</scope>
    <source>
        <strain>C3H/HeJ</strain>
        <tissue>Muscle</tissue>
    </source>
</reference>
<reference key="5">
    <citation type="journal article" date="2005" name="Science">
        <title>The transcriptional landscape of the mammalian genome.</title>
        <authorList>
            <person name="Carninci P."/>
            <person name="Kasukawa T."/>
            <person name="Katayama S."/>
            <person name="Gough J."/>
            <person name="Frith M.C."/>
            <person name="Maeda N."/>
            <person name="Oyama R."/>
            <person name="Ravasi T."/>
            <person name="Lenhard B."/>
            <person name="Wells C."/>
            <person name="Kodzius R."/>
            <person name="Shimokawa K."/>
            <person name="Bajic V.B."/>
            <person name="Brenner S.E."/>
            <person name="Batalov S."/>
            <person name="Forrest A.R."/>
            <person name="Zavolan M."/>
            <person name="Davis M.J."/>
            <person name="Wilming L.G."/>
            <person name="Aidinis V."/>
            <person name="Allen J.E."/>
            <person name="Ambesi-Impiombato A."/>
            <person name="Apweiler R."/>
            <person name="Aturaliya R.N."/>
            <person name="Bailey T.L."/>
            <person name="Bansal M."/>
            <person name="Baxter L."/>
            <person name="Beisel K.W."/>
            <person name="Bersano T."/>
            <person name="Bono H."/>
            <person name="Chalk A.M."/>
            <person name="Chiu K.P."/>
            <person name="Choudhary V."/>
            <person name="Christoffels A."/>
            <person name="Clutterbuck D.R."/>
            <person name="Crowe M.L."/>
            <person name="Dalla E."/>
            <person name="Dalrymple B.P."/>
            <person name="de Bono B."/>
            <person name="Della Gatta G."/>
            <person name="di Bernardo D."/>
            <person name="Down T."/>
            <person name="Engstrom P."/>
            <person name="Fagiolini M."/>
            <person name="Faulkner G."/>
            <person name="Fletcher C.F."/>
            <person name="Fukushima T."/>
            <person name="Furuno M."/>
            <person name="Futaki S."/>
            <person name="Gariboldi M."/>
            <person name="Georgii-Hemming P."/>
            <person name="Gingeras T.R."/>
            <person name="Gojobori T."/>
            <person name="Green R.E."/>
            <person name="Gustincich S."/>
            <person name="Harbers M."/>
            <person name="Hayashi Y."/>
            <person name="Hensch T.K."/>
            <person name="Hirokawa N."/>
            <person name="Hill D."/>
            <person name="Huminiecki L."/>
            <person name="Iacono M."/>
            <person name="Ikeo K."/>
            <person name="Iwama A."/>
            <person name="Ishikawa T."/>
            <person name="Jakt M."/>
            <person name="Kanapin A."/>
            <person name="Katoh M."/>
            <person name="Kawasawa Y."/>
            <person name="Kelso J."/>
            <person name="Kitamura H."/>
            <person name="Kitano H."/>
            <person name="Kollias G."/>
            <person name="Krishnan S.P."/>
            <person name="Kruger A."/>
            <person name="Kummerfeld S.K."/>
            <person name="Kurochkin I.V."/>
            <person name="Lareau L.F."/>
            <person name="Lazarevic D."/>
            <person name="Lipovich L."/>
            <person name="Liu J."/>
            <person name="Liuni S."/>
            <person name="McWilliam S."/>
            <person name="Madan Babu M."/>
            <person name="Madera M."/>
            <person name="Marchionni L."/>
            <person name="Matsuda H."/>
            <person name="Matsuzawa S."/>
            <person name="Miki H."/>
            <person name="Mignone F."/>
            <person name="Miyake S."/>
            <person name="Morris K."/>
            <person name="Mottagui-Tabar S."/>
            <person name="Mulder N."/>
            <person name="Nakano N."/>
            <person name="Nakauchi H."/>
            <person name="Ng P."/>
            <person name="Nilsson R."/>
            <person name="Nishiguchi S."/>
            <person name="Nishikawa S."/>
            <person name="Nori F."/>
            <person name="Ohara O."/>
            <person name="Okazaki Y."/>
            <person name="Orlando V."/>
            <person name="Pang K.C."/>
            <person name="Pavan W.J."/>
            <person name="Pavesi G."/>
            <person name="Pesole G."/>
            <person name="Petrovsky N."/>
            <person name="Piazza S."/>
            <person name="Reed J."/>
            <person name="Reid J.F."/>
            <person name="Ring B.Z."/>
            <person name="Ringwald M."/>
            <person name="Rost B."/>
            <person name="Ruan Y."/>
            <person name="Salzberg S.L."/>
            <person name="Sandelin A."/>
            <person name="Schneider C."/>
            <person name="Schoenbach C."/>
            <person name="Sekiguchi K."/>
            <person name="Semple C.A."/>
            <person name="Seno S."/>
            <person name="Sessa L."/>
            <person name="Sheng Y."/>
            <person name="Shibata Y."/>
            <person name="Shimada H."/>
            <person name="Shimada K."/>
            <person name="Silva D."/>
            <person name="Sinclair B."/>
            <person name="Sperling S."/>
            <person name="Stupka E."/>
            <person name="Sugiura K."/>
            <person name="Sultana R."/>
            <person name="Takenaka Y."/>
            <person name="Taki K."/>
            <person name="Tammoja K."/>
            <person name="Tan S.L."/>
            <person name="Tang S."/>
            <person name="Taylor M.S."/>
            <person name="Tegner J."/>
            <person name="Teichmann S.A."/>
            <person name="Ueda H.R."/>
            <person name="van Nimwegen E."/>
            <person name="Verardo R."/>
            <person name="Wei C.L."/>
            <person name="Yagi K."/>
            <person name="Yamanishi H."/>
            <person name="Zabarovsky E."/>
            <person name="Zhu S."/>
            <person name="Zimmer A."/>
            <person name="Hide W."/>
            <person name="Bult C."/>
            <person name="Grimmond S.M."/>
            <person name="Teasdale R.D."/>
            <person name="Liu E.T."/>
            <person name="Brusic V."/>
            <person name="Quackenbush J."/>
            <person name="Wahlestedt C."/>
            <person name="Mattick J.S."/>
            <person name="Hume D.A."/>
            <person name="Kai C."/>
            <person name="Sasaki D."/>
            <person name="Tomaru Y."/>
            <person name="Fukuda S."/>
            <person name="Kanamori-Katayama M."/>
            <person name="Suzuki M."/>
            <person name="Aoki J."/>
            <person name="Arakawa T."/>
            <person name="Iida J."/>
            <person name="Imamura K."/>
            <person name="Itoh M."/>
            <person name="Kato T."/>
            <person name="Kawaji H."/>
            <person name="Kawagashira N."/>
            <person name="Kawashima T."/>
            <person name="Kojima M."/>
            <person name="Kondo S."/>
            <person name="Konno H."/>
            <person name="Nakano K."/>
            <person name="Ninomiya N."/>
            <person name="Nishio T."/>
            <person name="Okada M."/>
            <person name="Plessy C."/>
            <person name="Shibata K."/>
            <person name="Shiraki T."/>
            <person name="Suzuki S."/>
            <person name="Tagami M."/>
            <person name="Waki K."/>
            <person name="Watahiki A."/>
            <person name="Okamura-Oho Y."/>
            <person name="Suzuki H."/>
            <person name="Kawai J."/>
            <person name="Hayashizaki Y."/>
        </authorList>
    </citation>
    <scope>NUCLEOTIDE SEQUENCE [LARGE SCALE MRNA] (ISOFORM 1)</scope>
    <source>
        <strain>C57BL/6J</strain>
        <tissue>Skin</tissue>
    </source>
</reference>
<reference key="6">
    <citation type="journal article" date="1995" name="Biochemistry">
        <title>Interactions between dystrophin glycoprotein complex proteins.</title>
        <authorList>
            <person name="Madhavan R."/>
            <person name="Jarrett H.W."/>
        </authorList>
    </citation>
    <scope>INTERACTION WITH SNTA1</scope>
</reference>
<reference key="7">
    <citation type="journal article" date="1997" name="J. Cell Biol.">
        <title>Differential association of syntrophin pairs with the dystrophin complex.</title>
        <authorList>
            <person name="Peters M.F."/>
            <person name="Adams M.E."/>
            <person name="Froehner S.C."/>
        </authorList>
    </citation>
    <scope>INTERACTION WITH SNTB1</scope>
</reference>
<reference key="8">
    <citation type="journal article" date="2001" name="J. Biol. Chem.">
        <title>Dysbindin, a novel coiled-coil-containing protein that interacts with the dystrobrevins in muscle and brain.</title>
        <authorList>
            <person name="Benson M.A."/>
            <person name="Newey S.E."/>
            <person name="Martin-Rendon E."/>
            <person name="Hawkes R."/>
            <person name="Blake D.J."/>
        </authorList>
    </citation>
    <scope>INTERACTION WITH DYSTROBREVIN BINDING PROTEIN 1</scope>
</reference>
<reference key="9">
    <citation type="journal article" date="2004" name="J. Biol. Chem.">
        <title>DAMAGE, a novel alpha-dystrobrevin-associated MAGE protein in dystrophin complexes.</title>
        <authorList>
            <person name="Albrecht D.E."/>
            <person name="Froehner S.C."/>
        </authorList>
    </citation>
    <scope>SUBCELLULAR LOCATION</scope>
    <scope>INTERACTION WITH MAGEE1</scope>
</reference>
<reference key="10">
    <citation type="journal article" date="2010" name="Cell">
        <title>A tissue-specific atlas of mouse protein phosphorylation and expression.</title>
        <authorList>
            <person name="Huttlin E.L."/>
            <person name="Jedrychowski M.P."/>
            <person name="Elias J.E."/>
            <person name="Goswami T."/>
            <person name="Rad R."/>
            <person name="Beausoleil S.A."/>
            <person name="Villen J."/>
            <person name="Haas W."/>
            <person name="Sowa M.E."/>
            <person name="Gygi S.P."/>
        </authorList>
    </citation>
    <scope>PHOSPHORYLATION [LARGE SCALE ANALYSIS] AT SER-666</scope>
    <scope>IDENTIFICATION BY MASS SPECTROMETRY [LARGE SCALE ANALYSIS]</scope>
    <source>
        <tissue>Brain</tissue>
        <tissue>Heart</tissue>
        <tissue>Lung</tissue>
        <tissue>Testis</tissue>
    </source>
</reference>
<reference evidence="13" key="11">
    <citation type="journal article" date="2012" name="J. Biol. Chem.">
        <title>Interaction of alpha-catulin with dystrobrevin contributes to integrity of dystrophin complex in muscle.</title>
        <authorList>
            <person name="Oh H.J."/>
            <person name="Abraham L.S."/>
            <person name="van Hengel J."/>
            <person name="Stove C."/>
            <person name="Proszynski T.J."/>
            <person name="Gevaert K."/>
            <person name="DiMario J.X."/>
            <person name="Sanes J.R."/>
            <person name="van Roy F."/>
            <person name="Kim H."/>
        </authorList>
    </citation>
    <scope>INTERACTION WITH CTNNAL1</scope>
    <scope>TISSUE SPECIFICITY</scope>
    <scope>DOMAIN</scope>
    <scope>DISRUPTION PHENOTYPE</scope>
</reference>
<reference key="12">
    <citation type="journal article" date="2017" name="Int. Heart J.">
        <title>Phenotype and functional analyses in a transgenic mouse model of left ventricular noncompaction caused by a DTNA mutation.</title>
        <authorList>
            <person name="Cao Q."/>
            <person name="Shen Y."/>
            <person name="Liu X."/>
            <person name="Yu X."/>
            <person name="Yuan P."/>
            <person name="Wan R."/>
            <person name="Liu X."/>
            <person name="Peng X."/>
            <person name="He W."/>
            <person name="Pu J."/>
            <person name="Hong K."/>
        </authorList>
    </citation>
    <scope>MUTAGENESIS OF ASN-49</scope>
</reference>
<keyword id="KW-0002">3D-structure</keyword>
<keyword id="KW-0025">Alternative splicing</keyword>
<keyword id="KW-1003">Cell membrane</keyword>
<keyword id="KW-0175">Coiled coil</keyword>
<keyword id="KW-0963">Cytoplasm</keyword>
<keyword id="KW-0472">Membrane</keyword>
<keyword id="KW-0479">Metal-binding</keyword>
<keyword id="KW-0597">Phosphoprotein</keyword>
<keyword id="KW-1185">Reference proteome</keyword>
<keyword id="KW-0770">Synapse</keyword>
<keyword id="KW-0862">Zinc</keyword>
<keyword id="KW-0863">Zinc-finger</keyword>
<organism>
    <name type="scientific">Mus musculus</name>
    <name type="common">Mouse</name>
    <dbReference type="NCBI Taxonomy" id="10090"/>
    <lineage>
        <taxon>Eukaryota</taxon>
        <taxon>Metazoa</taxon>
        <taxon>Chordata</taxon>
        <taxon>Craniata</taxon>
        <taxon>Vertebrata</taxon>
        <taxon>Euteleostomi</taxon>
        <taxon>Mammalia</taxon>
        <taxon>Eutheria</taxon>
        <taxon>Euarchontoglires</taxon>
        <taxon>Glires</taxon>
        <taxon>Rodentia</taxon>
        <taxon>Myomorpha</taxon>
        <taxon>Muroidea</taxon>
        <taxon>Muridae</taxon>
        <taxon>Murinae</taxon>
        <taxon>Mus</taxon>
        <taxon>Mus</taxon>
    </lineage>
</organism>
<proteinExistence type="evidence at protein level"/>
<evidence type="ECO:0000255" key="1"/>
<evidence type="ECO:0000255" key="2">
    <source>
        <dbReference type="PROSITE-ProRule" id="PRU00228"/>
    </source>
</evidence>
<evidence type="ECO:0000256" key="3">
    <source>
        <dbReference type="SAM" id="MobiDB-lite"/>
    </source>
</evidence>
<evidence type="ECO:0000269" key="4">
    <source>
    </source>
</evidence>
<evidence type="ECO:0000269" key="5">
    <source>
    </source>
</evidence>
<evidence type="ECO:0000269" key="6">
    <source>
    </source>
</evidence>
<evidence type="ECO:0000269" key="7">
    <source>
    </source>
</evidence>
<evidence type="ECO:0000269" key="8">
    <source>
    </source>
</evidence>
<evidence type="ECO:0000269" key="9">
    <source>
    </source>
</evidence>
<evidence type="ECO:0000303" key="10">
    <source>
    </source>
</evidence>
<evidence type="ECO:0000303" key="11">
    <source>
    </source>
</evidence>
<evidence type="ECO:0000303" key="12">
    <source>
    </source>
</evidence>
<evidence type="ECO:0000305" key="13"/>
<evidence type="ECO:0007744" key="14">
    <source>
    </source>
</evidence>
<gene>
    <name type="primary">Dtna</name>
    <name type="synonym">Dtn</name>
</gene>
<accession>Q9D2N4</accession>
<accession>P97319</accession>
<accession>Q61498</accession>
<accession>Q61499</accession>
<accession>Q9QZZ5</accession>
<accession>Q9WUL9</accession>
<accession>Q9WUM0</accession>
<name>DTNA_MOUSE</name>
<sequence>MIEDSGKRGNTMAERRQLFAEMRAQDLDRIRLSTYRTACKLRFVQKKCNLHLVDIWNVIEALRENALNNLDPNIELNVARLEAVLSTIFYQLNKRMPTTHQIHVEQSISLLLNFLLAAFDPEGHGKISVFAVKMALATLCGGKIMDKLRYIFSMISDSSGVMVYGRYDQFLREVLKLPTAVFEGPSFGYTEQSARSCFSQQKKVTLNGFLDTLMSDPPPQCLVWLPLLHRLANVENVFHPVECSYCHSESMMGFRYRCQQCHNYQLCQDCFWRGHAGGSHSNQHQMKEYTSWKSPAKKLTNALSKSLSCASSREPLHPMFPDQPEKPLNLAHIVPPRPVTSMNDTLFSHSVPSSGSPFITRSSPPKDSEVEQNKMLARAAPAFLKGRGIQYSLNVADRLADEHVLIGLYVNMLRNDPPCMLESSNRLDEEHRLIARYAARLAAESSSSQPTQQRSAPDISFTIDANKQQRQLIAELENKNREILQEIQRLRVEHEQASQPTPEKAQQNPTLLAELRLLRQRKDELEQRMSALQESRRELMVQLEGLMKLLKEEELKQGTQGASSPRSSPSHTISRPIPMPIRSASACPTPTHTPQDSLTGVGGDVQEAFAQSSRRNLRSDLLVAADSITNTMSSLVKELNSEVASETESTVDSEFSRPQFEDLAPSPTSEKAFLAQIHSRKPGYIHGGAASTTHGDMVPEDGDPYTQPEDGNYENESVRQLENELQLEEYLKQKLQDEAYQVSLQG</sequence>
<comment type="function">
    <text>Involved in synapse maturation and required for normal muscle function.</text>
</comment>
<comment type="subunit">
    <text evidence="4 5 6 8 9">Interacts with dystrophin, utrophin and the syntrophins SNTA1, SNTB1, SNTB2, SNTG1 and SNTG2. Binds dystrobrevin binding protein 1. Interacts with MAGEE1 (PubMed:11316798, PubMed:14623885, PubMed:7547961, PubMed:9214383). Interacts with Ctnnal1 (PubMed:22577143). The interaction is required for correct localization of both Ctnnal1 and Dtna (PubMed:22577143).</text>
</comment>
<comment type="subunit">
    <molecule>Isoform 3</molecule>
    <text evidence="9">Does not interact with utrophin.</text>
</comment>
<comment type="subunit">
    <molecule>Isoform 4</molecule>
    <text evidence="9">Does not interact with utrophin.</text>
</comment>
<comment type="subunit">
    <molecule>Isoform 5</molecule>
    <text evidence="9">Does not interact with syntrophin.</text>
</comment>
<comment type="subunit">
    <molecule>Isoform 6</molecule>
    <text evidence="9">Does not interact with syntrophin.</text>
</comment>
<comment type="interaction">
    <interactant intactId="EBI-296019">
        <id>Q9D2N4</id>
    </interactant>
    <interactant intactId="EBI-643186">
        <id>Q91WZ8</id>
        <label>Dtnbp1</label>
    </interactant>
    <organismsDiffer>false</organismsDiffer>
    <experiments>3</experiments>
</comment>
<comment type="subcellular location">
    <subcellularLocation>
        <location evidence="5">Cytoplasm</location>
    </subcellularLocation>
    <subcellularLocation>
        <location evidence="5">Synapse</location>
    </subcellularLocation>
    <subcellularLocation>
        <location evidence="5">Cell membrane</location>
    </subcellularLocation>
    <text>In peripheral nerves, colocalizes with MAGEE1 in the Schwann cell membrane.</text>
</comment>
<comment type="alternative products">
    <event type="alternative splicing"/>
    <isoform>
        <id>Q9D2N4-1</id>
        <name>1</name>
        <sequence type="displayed"/>
    </isoform>
    <isoform>
        <id>Q9D2N4-2</id>
        <name>2</name>
        <name>Alpha-dystrobrevin-1</name>
        <name>Alpha-DB1</name>
        <sequence type="described" ref="VSP_004215 VSP_004220"/>
    </isoform>
    <isoform>
        <id>Q9D2N4-3</id>
        <name>3</name>
        <name>Alpha-dystrobrevin-2B</name>
        <name>Alpha-DB2B</name>
        <sequence type="described" ref="VSP_004221 VSP_004222"/>
    </isoform>
    <isoform>
        <id>Q9D2N4-4</id>
        <name>4</name>
        <name>Alpha-dystrobrevin-2A</name>
        <name>Alpha-DB2A</name>
        <sequence type="described" ref="VSP_004218 VSP_004219"/>
    </isoform>
    <isoform>
        <id>Q9D2N4-5</id>
        <name>5</name>
        <name>Alpha-dystrobrevin-3</name>
        <name>Alpha-DB3</name>
        <sequence type="described" ref="VSP_004214 VSP_004216 VSP_004217"/>
    </isoform>
    <isoform>
        <id>Q9D2N4-6</id>
        <name>6</name>
        <name>Alpha-dystrobrevin-3</name>
        <name>Alpha-DB3</name>
        <sequence type="described" ref="VSP_004216 VSP_004217"/>
    </isoform>
    <isoform>
        <id>Q9D2N4-7</id>
        <name>7</name>
        <sequence type="described" ref="VSP_004214 VSP_004215 VSP_004218 VSP_004219"/>
    </isoform>
    <text>Additional isoforms seem to exist.</text>
</comment>
<comment type="tissue specificity">
    <text evidence="6">Expressed in skeletal muscle, heart, lung and brain. Sarcolemma and neuromuscular junction in skeletal muscle. Isoform 2 is restricted to the neuromuscular junction. Isoforms 5 and 6 are only expressed in muscle.</text>
</comment>
<comment type="developmental stage">
    <text>Expression of alpha-dystrobrevin is up-regulated during differentiation, with isoforms 2, 5 and 6 expressed earliest and isoform 3 and 4 expressed later.</text>
</comment>
<comment type="domain">
    <text evidence="6">The coiled-coil domain mediates the interaction with dystrophin, alpha-catulin and utrophin.</text>
</comment>
<comment type="PTM">
    <text>Phosphorylation of isoform 2 on tyrosine kinase substrate domain present in the C-terminus.</text>
</comment>
<comment type="disruption phenotype">
    <text evidence="6">Increases alpha-catulin protein in mdx muscle.</text>
</comment>
<comment type="similarity">
    <text evidence="13">Belongs to the dystrophin family. Dystrobrevin subfamily.</text>
</comment>